<protein>
    <recommendedName>
        <fullName evidence="1">Methionine--tRNA ligase</fullName>
        <ecNumber evidence="1">6.1.1.10</ecNumber>
    </recommendedName>
    <alternativeName>
        <fullName evidence="1">Methionyl-tRNA synthetase</fullName>
        <shortName evidence="1">MetRS</shortName>
    </alternativeName>
</protein>
<gene>
    <name evidence="1" type="primary">metG</name>
    <name type="ordered locus">Shewmr4_1655</name>
</gene>
<organism>
    <name type="scientific">Shewanella sp. (strain MR-4)</name>
    <dbReference type="NCBI Taxonomy" id="60480"/>
    <lineage>
        <taxon>Bacteria</taxon>
        <taxon>Pseudomonadati</taxon>
        <taxon>Pseudomonadota</taxon>
        <taxon>Gammaproteobacteria</taxon>
        <taxon>Alteromonadales</taxon>
        <taxon>Shewanellaceae</taxon>
        <taxon>Shewanella</taxon>
    </lineage>
</organism>
<reference key="1">
    <citation type="submission" date="2006-08" db="EMBL/GenBank/DDBJ databases">
        <title>Complete sequence of Shewanella sp. MR-4.</title>
        <authorList>
            <consortium name="US DOE Joint Genome Institute"/>
            <person name="Copeland A."/>
            <person name="Lucas S."/>
            <person name="Lapidus A."/>
            <person name="Barry K."/>
            <person name="Detter J.C."/>
            <person name="Glavina del Rio T."/>
            <person name="Hammon N."/>
            <person name="Israni S."/>
            <person name="Dalin E."/>
            <person name="Tice H."/>
            <person name="Pitluck S."/>
            <person name="Kiss H."/>
            <person name="Brettin T."/>
            <person name="Bruce D."/>
            <person name="Han C."/>
            <person name="Tapia R."/>
            <person name="Gilna P."/>
            <person name="Schmutz J."/>
            <person name="Larimer F."/>
            <person name="Land M."/>
            <person name="Hauser L."/>
            <person name="Kyrpides N."/>
            <person name="Mikhailova N."/>
            <person name="Nealson K."/>
            <person name="Konstantinidis K."/>
            <person name="Klappenbach J."/>
            <person name="Tiedje J."/>
            <person name="Richardson P."/>
        </authorList>
    </citation>
    <scope>NUCLEOTIDE SEQUENCE [LARGE SCALE GENOMIC DNA]</scope>
    <source>
        <strain>MR-4</strain>
    </source>
</reference>
<feature type="chain" id="PRO_0000331910" description="Methionine--tRNA ligase">
    <location>
        <begin position="1"/>
        <end position="676"/>
    </location>
</feature>
<feature type="domain" description="tRNA-binding" evidence="1">
    <location>
        <begin position="575"/>
        <end position="676"/>
    </location>
</feature>
<feature type="short sequence motif" description="'HIGH' region">
    <location>
        <begin position="15"/>
        <end position="25"/>
    </location>
</feature>
<feature type="short sequence motif" description="'KMSKS' region">
    <location>
        <begin position="332"/>
        <end position="336"/>
    </location>
</feature>
<feature type="binding site" evidence="1">
    <location>
        <position position="146"/>
    </location>
    <ligand>
        <name>Zn(2+)</name>
        <dbReference type="ChEBI" id="CHEBI:29105"/>
    </ligand>
</feature>
<feature type="binding site" evidence="1">
    <location>
        <position position="149"/>
    </location>
    <ligand>
        <name>Zn(2+)</name>
        <dbReference type="ChEBI" id="CHEBI:29105"/>
    </ligand>
</feature>
<feature type="binding site" evidence="1">
    <location>
        <position position="159"/>
    </location>
    <ligand>
        <name>Zn(2+)</name>
        <dbReference type="ChEBI" id="CHEBI:29105"/>
    </ligand>
</feature>
<feature type="binding site" evidence="1">
    <location>
        <position position="162"/>
    </location>
    <ligand>
        <name>Zn(2+)</name>
        <dbReference type="ChEBI" id="CHEBI:29105"/>
    </ligand>
</feature>
<feature type="binding site" evidence="1">
    <location>
        <position position="335"/>
    </location>
    <ligand>
        <name>ATP</name>
        <dbReference type="ChEBI" id="CHEBI:30616"/>
    </ligand>
</feature>
<keyword id="KW-0030">Aminoacyl-tRNA synthetase</keyword>
<keyword id="KW-0067">ATP-binding</keyword>
<keyword id="KW-0963">Cytoplasm</keyword>
<keyword id="KW-0436">Ligase</keyword>
<keyword id="KW-0479">Metal-binding</keyword>
<keyword id="KW-0547">Nucleotide-binding</keyword>
<keyword id="KW-0648">Protein biosynthesis</keyword>
<keyword id="KW-0694">RNA-binding</keyword>
<keyword id="KW-0820">tRNA-binding</keyword>
<keyword id="KW-0862">Zinc</keyword>
<dbReference type="EC" id="6.1.1.10" evidence="1"/>
<dbReference type="EMBL" id="CP000446">
    <property type="protein sequence ID" value="ABI38731.1"/>
    <property type="molecule type" value="Genomic_DNA"/>
</dbReference>
<dbReference type="RefSeq" id="WP_011622432.1">
    <property type="nucleotide sequence ID" value="NC_008321.1"/>
</dbReference>
<dbReference type="SMR" id="Q0HJN6"/>
<dbReference type="KEGG" id="she:Shewmr4_1655"/>
<dbReference type="HOGENOM" id="CLU_009710_7_0_6"/>
<dbReference type="GO" id="GO:0005829">
    <property type="term" value="C:cytosol"/>
    <property type="evidence" value="ECO:0007669"/>
    <property type="project" value="TreeGrafter"/>
</dbReference>
<dbReference type="GO" id="GO:0005524">
    <property type="term" value="F:ATP binding"/>
    <property type="evidence" value="ECO:0007669"/>
    <property type="project" value="UniProtKB-UniRule"/>
</dbReference>
<dbReference type="GO" id="GO:0046872">
    <property type="term" value="F:metal ion binding"/>
    <property type="evidence" value="ECO:0007669"/>
    <property type="project" value="UniProtKB-KW"/>
</dbReference>
<dbReference type="GO" id="GO:0004825">
    <property type="term" value="F:methionine-tRNA ligase activity"/>
    <property type="evidence" value="ECO:0007669"/>
    <property type="project" value="UniProtKB-UniRule"/>
</dbReference>
<dbReference type="GO" id="GO:0000049">
    <property type="term" value="F:tRNA binding"/>
    <property type="evidence" value="ECO:0007669"/>
    <property type="project" value="UniProtKB-KW"/>
</dbReference>
<dbReference type="GO" id="GO:0006431">
    <property type="term" value="P:methionyl-tRNA aminoacylation"/>
    <property type="evidence" value="ECO:0007669"/>
    <property type="project" value="UniProtKB-UniRule"/>
</dbReference>
<dbReference type="CDD" id="cd07957">
    <property type="entry name" value="Anticodon_Ia_Met"/>
    <property type="match status" value="1"/>
</dbReference>
<dbReference type="CDD" id="cd00814">
    <property type="entry name" value="MetRS_core"/>
    <property type="match status" value="1"/>
</dbReference>
<dbReference type="CDD" id="cd02800">
    <property type="entry name" value="tRNA_bind_EcMetRS_like"/>
    <property type="match status" value="1"/>
</dbReference>
<dbReference type="FunFam" id="1.10.730.10:FF:000005">
    <property type="entry name" value="Methionine--tRNA ligase"/>
    <property type="match status" value="1"/>
</dbReference>
<dbReference type="FunFam" id="2.20.28.20:FF:000001">
    <property type="entry name" value="Methionine--tRNA ligase"/>
    <property type="match status" value="1"/>
</dbReference>
<dbReference type="FunFam" id="2.40.50.140:FF:000042">
    <property type="entry name" value="Methionine--tRNA ligase"/>
    <property type="match status" value="1"/>
</dbReference>
<dbReference type="Gene3D" id="3.40.50.620">
    <property type="entry name" value="HUPs"/>
    <property type="match status" value="1"/>
</dbReference>
<dbReference type="Gene3D" id="1.10.730.10">
    <property type="entry name" value="Isoleucyl-tRNA Synthetase, Domain 1"/>
    <property type="match status" value="1"/>
</dbReference>
<dbReference type="Gene3D" id="2.20.28.20">
    <property type="entry name" value="Methionyl-tRNA synthetase, Zn-domain"/>
    <property type="match status" value="1"/>
</dbReference>
<dbReference type="Gene3D" id="2.40.50.140">
    <property type="entry name" value="Nucleic acid-binding proteins"/>
    <property type="match status" value="1"/>
</dbReference>
<dbReference type="HAMAP" id="MF_00098">
    <property type="entry name" value="Met_tRNA_synth_type1"/>
    <property type="match status" value="1"/>
</dbReference>
<dbReference type="InterPro" id="IPR001412">
    <property type="entry name" value="aa-tRNA-synth_I_CS"/>
</dbReference>
<dbReference type="InterPro" id="IPR041872">
    <property type="entry name" value="Anticodon_Met"/>
</dbReference>
<dbReference type="InterPro" id="IPR004495">
    <property type="entry name" value="Met-tRNA-synth_bsu_C"/>
</dbReference>
<dbReference type="InterPro" id="IPR023458">
    <property type="entry name" value="Met-tRNA_ligase_1"/>
</dbReference>
<dbReference type="InterPro" id="IPR014758">
    <property type="entry name" value="Met-tRNA_synth"/>
</dbReference>
<dbReference type="InterPro" id="IPR015413">
    <property type="entry name" value="Methionyl/Leucyl_tRNA_Synth"/>
</dbReference>
<dbReference type="InterPro" id="IPR033911">
    <property type="entry name" value="MetRS_core"/>
</dbReference>
<dbReference type="InterPro" id="IPR029038">
    <property type="entry name" value="MetRS_Zn"/>
</dbReference>
<dbReference type="InterPro" id="IPR012340">
    <property type="entry name" value="NA-bd_OB-fold"/>
</dbReference>
<dbReference type="InterPro" id="IPR014729">
    <property type="entry name" value="Rossmann-like_a/b/a_fold"/>
</dbReference>
<dbReference type="InterPro" id="IPR002547">
    <property type="entry name" value="tRNA-bd_dom"/>
</dbReference>
<dbReference type="InterPro" id="IPR009080">
    <property type="entry name" value="tRNAsynth_Ia_anticodon-bd"/>
</dbReference>
<dbReference type="NCBIfam" id="TIGR00398">
    <property type="entry name" value="metG"/>
    <property type="match status" value="1"/>
</dbReference>
<dbReference type="NCBIfam" id="TIGR00399">
    <property type="entry name" value="metG_C_term"/>
    <property type="match status" value="1"/>
</dbReference>
<dbReference type="NCBIfam" id="NF001100">
    <property type="entry name" value="PRK00133.1"/>
    <property type="match status" value="1"/>
</dbReference>
<dbReference type="PANTHER" id="PTHR45765">
    <property type="entry name" value="METHIONINE--TRNA LIGASE"/>
    <property type="match status" value="1"/>
</dbReference>
<dbReference type="PANTHER" id="PTHR45765:SF1">
    <property type="entry name" value="METHIONINE--TRNA LIGASE, CYTOPLASMIC"/>
    <property type="match status" value="1"/>
</dbReference>
<dbReference type="Pfam" id="PF19303">
    <property type="entry name" value="Anticodon_3"/>
    <property type="match status" value="1"/>
</dbReference>
<dbReference type="Pfam" id="PF09334">
    <property type="entry name" value="tRNA-synt_1g"/>
    <property type="match status" value="1"/>
</dbReference>
<dbReference type="Pfam" id="PF01588">
    <property type="entry name" value="tRNA_bind"/>
    <property type="match status" value="1"/>
</dbReference>
<dbReference type="PRINTS" id="PR01041">
    <property type="entry name" value="TRNASYNTHMET"/>
</dbReference>
<dbReference type="SUPFAM" id="SSF47323">
    <property type="entry name" value="Anticodon-binding domain of a subclass of class I aminoacyl-tRNA synthetases"/>
    <property type="match status" value="1"/>
</dbReference>
<dbReference type="SUPFAM" id="SSF57770">
    <property type="entry name" value="Methionyl-tRNA synthetase (MetRS), Zn-domain"/>
    <property type="match status" value="1"/>
</dbReference>
<dbReference type="SUPFAM" id="SSF50249">
    <property type="entry name" value="Nucleic acid-binding proteins"/>
    <property type="match status" value="1"/>
</dbReference>
<dbReference type="SUPFAM" id="SSF52374">
    <property type="entry name" value="Nucleotidylyl transferase"/>
    <property type="match status" value="1"/>
</dbReference>
<dbReference type="PROSITE" id="PS00178">
    <property type="entry name" value="AA_TRNA_LIGASE_I"/>
    <property type="match status" value="1"/>
</dbReference>
<dbReference type="PROSITE" id="PS50886">
    <property type="entry name" value="TRBD"/>
    <property type="match status" value="1"/>
</dbReference>
<proteinExistence type="inferred from homology"/>
<comment type="function">
    <text evidence="1">Is required not only for elongation of protein synthesis but also for the initiation of all mRNA translation through initiator tRNA(fMet) aminoacylation.</text>
</comment>
<comment type="catalytic activity">
    <reaction evidence="1">
        <text>tRNA(Met) + L-methionine + ATP = L-methionyl-tRNA(Met) + AMP + diphosphate</text>
        <dbReference type="Rhea" id="RHEA:13481"/>
        <dbReference type="Rhea" id="RHEA-COMP:9667"/>
        <dbReference type="Rhea" id="RHEA-COMP:9698"/>
        <dbReference type="ChEBI" id="CHEBI:30616"/>
        <dbReference type="ChEBI" id="CHEBI:33019"/>
        <dbReference type="ChEBI" id="CHEBI:57844"/>
        <dbReference type="ChEBI" id="CHEBI:78442"/>
        <dbReference type="ChEBI" id="CHEBI:78530"/>
        <dbReference type="ChEBI" id="CHEBI:456215"/>
        <dbReference type="EC" id="6.1.1.10"/>
    </reaction>
</comment>
<comment type="cofactor">
    <cofactor evidence="1">
        <name>Zn(2+)</name>
        <dbReference type="ChEBI" id="CHEBI:29105"/>
    </cofactor>
    <text evidence="1">Binds 1 zinc ion per subunit.</text>
</comment>
<comment type="subunit">
    <text evidence="1">Homodimer.</text>
</comment>
<comment type="subcellular location">
    <subcellularLocation>
        <location evidence="1">Cytoplasm</location>
    </subcellularLocation>
</comment>
<comment type="similarity">
    <text evidence="1">Belongs to the class-I aminoacyl-tRNA synthetase family. MetG type 1 subfamily.</text>
</comment>
<name>SYM_SHESM</name>
<accession>Q0HJN6</accession>
<evidence type="ECO:0000255" key="1">
    <source>
        <dbReference type="HAMAP-Rule" id="MF_00098"/>
    </source>
</evidence>
<sequence length="676" mass="76195">MATSQRKILVTSALPYANGPIHLGHMLEYIQTDIWSRYQKLRGHECHYICADDAHGTPIMLKAQQLGMAPEEMIAQVNKEHQQDFADFNIAFDNYHSTHSEENRVLASDIYLKLRANGYIKSKSISQLFDPEKSMFLPDRFVKGTCPKCKSPDQYGDNCDACGATYSPTELINPKSAVSGATPVMKDTEHFFFDLPAFEDMLKEWTRSGALQTEMANKLDEWFEQGLQQWDITRDAPYFGFEIPDAPGKYFYVWLDAPIGYMGSFKNLCDKRPELSFDEFWAKDSKAEVYHFIGKDIVYFHSLFWPAMLHGSGYRQPNSVYAHGYVTVNGAKMSKSKGTFIKARTYLDHLDPEYLRYYYAAKLSSRIDDLDLNLEDFAQRVNSDLVGKLVNLASRTAGFITKRFDGKLAKIADTTLTDAFLAKQEQIAEFYETREYGKAMREIMALADIANGFVADAAPWQLVKQDDQQEVAHQVCSNALNLFRILVTYLKPVLPRLAQDVEAFFQQTLTWDGLGQDMAGHEIAPFKAMMQRVEFDKVEAMVADSKENLQATSEPEAPKGPLATDPISDTINFDDFAKIDLRIARIVKAEHVAEADKLLKLQLDIGGETRQVFAGIKSAYSPEDLEGKLTVMVANLAPRKMRFGMSEGMVLAAGPGGSDLWILEPHEGAQPGMRVK</sequence>